<dbReference type="EMBL" id="AP009240">
    <property type="protein sequence ID" value="BAG78616.1"/>
    <property type="molecule type" value="Genomic_DNA"/>
</dbReference>
<dbReference type="RefSeq" id="WP_000004644.1">
    <property type="nucleotide sequence ID" value="NC_011415.1"/>
</dbReference>
<dbReference type="SMR" id="B6I6W0"/>
<dbReference type="KEGG" id="ecy:ECSE_3092"/>
<dbReference type="HOGENOM" id="CLU_047399_0_0_6"/>
<dbReference type="Proteomes" id="UP000008199">
    <property type="component" value="Chromosome"/>
</dbReference>
<dbReference type="GO" id="GO:0005886">
    <property type="term" value="C:plasma membrane"/>
    <property type="evidence" value="ECO:0007669"/>
    <property type="project" value="UniProtKB-SubCell"/>
</dbReference>
<dbReference type="GO" id="GO:0051978">
    <property type="term" value="F:lysophospholipid:sodium symporter activity"/>
    <property type="evidence" value="ECO:0007669"/>
    <property type="project" value="InterPro"/>
</dbReference>
<dbReference type="CDD" id="cd06173">
    <property type="entry name" value="MFS_MefA_like"/>
    <property type="match status" value="1"/>
</dbReference>
<dbReference type="FunFam" id="1.20.1250.20:FF:000091">
    <property type="entry name" value="Lysophospholipid transporter LplT"/>
    <property type="match status" value="1"/>
</dbReference>
<dbReference type="Gene3D" id="1.20.1250.20">
    <property type="entry name" value="MFS general substrate transporter like domains"/>
    <property type="match status" value="1"/>
</dbReference>
<dbReference type="HAMAP" id="MF_01585">
    <property type="entry name" value="MFS_LplT"/>
    <property type="match status" value="1"/>
</dbReference>
<dbReference type="InterPro" id="IPR023727">
    <property type="entry name" value="LysoPLipid__transptr_LplT"/>
</dbReference>
<dbReference type="InterPro" id="IPR011701">
    <property type="entry name" value="MFS"/>
</dbReference>
<dbReference type="InterPro" id="IPR036259">
    <property type="entry name" value="MFS_trans_sf"/>
</dbReference>
<dbReference type="NCBIfam" id="NF008397">
    <property type="entry name" value="PRK11195.1"/>
    <property type="match status" value="1"/>
</dbReference>
<dbReference type="PANTHER" id="PTHR43266">
    <property type="entry name" value="MACROLIDE-EFFLUX PROTEIN"/>
    <property type="match status" value="1"/>
</dbReference>
<dbReference type="PANTHER" id="PTHR43266:SF2">
    <property type="entry name" value="MAJOR FACILITATOR SUPERFAMILY (MFS) PROFILE DOMAIN-CONTAINING PROTEIN"/>
    <property type="match status" value="1"/>
</dbReference>
<dbReference type="Pfam" id="PF07690">
    <property type="entry name" value="MFS_1"/>
    <property type="match status" value="1"/>
</dbReference>
<dbReference type="SUPFAM" id="SSF103473">
    <property type="entry name" value="MFS general substrate transporter"/>
    <property type="match status" value="1"/>
</dbReference>
<sequence length="397" mass="41642">MSESVHTNTSLWSKGMKAVIVAQFLSAFGDNALLFATLALLNAQFYPEWSQPILQMVFVGAYILFAPFVGQVADSFAKGRVMMFANGLKLLGAASICFGINPFLGYTLVGVGAAAYSPAKYGILGELTTGSKLVKANGLMEASTIAAILLGSVAGGVLADWHVLVALAACALAYGGAVVANIYIPKLAAARPGQSWNLINMTRSFLNACTSLWRNGETRFSLVGTSLFWGAGVTLRFLLVLWVPVALGITDNATPTYLNAMVAIGIVVGAGAAAKLVTLETVSRCMPAGILIGVVVLIFSLQHELLPAYALLMLIGVMGGFFVVPLNALLQERGKKSVGAGNAIAVQNLGENSAMLLMLGIYSLAVMIGIPVVPIGIGFGALFALAITALWIWQRRH</sequence>
<keyword id="KW-0997">Cell inner membrane</keyword>
<keyword id="KW-1003">Cell membrane</keyword>
<keyword id="KW-0445">Lipid transport</keyword>
<keyword id="KW-0472">Membrane</keyword>
<keyword id="KW-0812">Transmembrane</keyword>
<keyword id="KW-1133">Transmembrane helix</keyword>
<keyword id="KW-0813">Transport</keyword>
<feature type="chain" id="PRO_1000201264" description="Lysophospholipid transporter LplT">
    <location>
        <begin position="1"/>
        <end position="397"/>
    </location>
</feature>
<feature type="topological domain" description="Periplasmic" evidence="1">
    <location>
        <begin position="1"/>
        <end position="17"/>
    </location>
</feature>
<feature type="transmembrane region" description="Helical" evidence="1">
    <location>
        <begin position="18"/>
        <end position="38"/>
    </location>
</feature>
<feature type="topological domain" description="Cytoplasmic" evidence="1">
    <location>
        <begin position="39"/>
        <end position="52"/>
    </location>
</feature>
<feature type="transmembrane region" description="Helical" evidence="1">
    <location>
        <begin position="53"/>
        <end position="73"/>
    </location>
</feature>
<feature type="topological domain" description="Periplasmic" evidence="1">
    <location>
        <begin position="74"/>
        <end position="90"/>
    </location>
</feature>
<feature type="transmembrane region" description="Helical" evidence="1">
    <location>
        <begin position="91"/>
        <end position="111"/>
    </location>
</feature>
<feature type="topological domain" description="Cytoplasmic" evidence="1">
    <location>
        <begin position="112"/>
        <end position="144"/>
    </location>
</feature>
<feature type="transmembrane region" description="Helical" evidence="1">
    <location>
        <begin position="145"/>
        <end position="165"/>
    </location>
</feature>
<feature type="topological domain" description="Periplasmic" evidence="1">
    <location>
        <position position="166"/>
    </location>
</feature>
<feature type="transmembrane region" description="Helical" evidence="1">
    <location>
        <begin position="167"/>
        <end position="187"/>
    </location>
</feature>
<feature type="topological domain" description="Cytoplasmic" evidence="1">
    <location>
        <begin position="188"/>
        <end position="226"/>
    </location>
</feature>
<feature type="transmembrane region" description="Helical" evidence="1">
    <location>
        <begin position="227"/>
        <end position="247"/>
    </location>
</feature>
<feature type="topological domain" description="Periplasmic" evidence="1">
    <location>
        <begin position="248"/>
        <end position="256"/>
    </location>
</feature>
<feature type="transmembrane region" description="Helical" evidence="1">
    <location>
        <begin position="257"/>
        <end position="277"/>
    </location>
</feature>
<feature type="topological domain" description="Cytoplasmic" evidence="1">
    <location>
        <begin position="278"/>
        <end position="280"/>
    </location>
</feature>
<feature type="transmembrane region" description="Helical" evidence="1">
    <location>
        <begin position="281"/>
        <end position="301"/>
    </location>
</feature>
<feature type="topological domain" description="Periplasmic" evidence="1">
    <location>
        <begin position="302"/>
        <end position="304"/>
    </location>
</feature>
<feature type="transmembrane region" description="Helical" evidence="1">
    <location>
        <begin position="305"/>
        <end position="325"/>
    </location>
</feature>
<feature type="topological domain" description="Cytoplasmic" evidence="1">
    <location>
        <begin position="326"/>
        <end position="343"/>
    </location>
</feature>
<feature type="transmembrane region" description="Helical" evidence="1">
    <location>
        <begin position="344"/>
        <end position="364"/>
    </location>
</feature>
<feature type="topological domain" description="Periplasmic" evidence="1">
    <location>
        <begin position="365"/>
        <end position="366"/>
    </location>
</feature>
<feature type="transmembrane region" description="Helical" evidence="1">
    <location>
        <begin position="367"/>
        <end position="387"/>
    </location>
</feature>
<feature type="topological domain" description="Cytoplasmic" evidence="1">
    <location>
        <begin position="388"/>
        <end position="397"/>
    </location>
</feature>
<reference key="1">
    <citation type="journal article" date="2008" name="DNA Res.">
        <title>Complete genome sequence and comparative analysis of the wild-type commensal Escherichia coli strain SE11 isolated from a healthy adult.</title>
        <authorList>
            <person name="Oshima K."/>
            <person name="Toh H."/>
            <person name="Ogura Y."/>
            <person name="Sasamoto H."/>
            <person name="Morita H."/>
            <person name="Park S.-H."/>
            <person name="Ooka T."/>
            <person name="Iyoda S."/>
            <person name="Taylor T.D."/>
            <person name="Hayashi T."/>
            <person name="Itoh K."/>
            <person name="Hattori M."/>
        </authorList>
    </citation>
    <scope>NUCLEOTIDE SEQUENCE [LARGE SCALE GENOMIC DNA]</scope>
    <source>
        <strain>SE11</strain>
    </source>
</reference>
<accession>B6I6W0</accession>
<protein>
    <recommendedName>
        <fullName evidence="1">Lysophospholipid transporter LplT</fullName>
    </recommendedName>
</protein>
<evidence type="ECO:0000255" key="1">
    <source>
        <dbReference type="HAMAP-Rule" id="MF_01585"/>
    </source>
</evidence>
<organism>
    <name type="scientific">Escherichia coli (strain SE11)</name>
    <dbReference type="NCBI Taxonomy" id="409438"/>
    <lineage>
        <taxon>Bacteria</taxon>
        <taxon>Pseudomonadati</taxon>
        <taxon>Pseudomonadota</taxon>
        <taxon>Gammaproteobacteria</taxon>
        <taxon>Enterobacterales</taxon>
        <taxon>Enterobacteriaceae</taxon>
        <taxon>Escherichia</taxon>
    </lineage>
</organism>
<name>LPLT_ECOSE</name>
<gene>
    <name evidence="1" type="primary">lplT</name>
    <name type="ordered locus">ECSE_3092</name>
</gene>
<comment type="function">
    <text evidence="1">Catalyzes the facilitated diffusion of 2-acyl-glycero-3-phosphoethanolamine (2-acyl-GPE) into the cell.</text>
</comment>
<comment type="subcellular location">
    <subcellularLocation>
        <location evidence="1">Cell inner membrane</location>
        <topology evidence="1">Multi-pass membrane protein</topology>
    </subcellularLocation>
</comment>
<comment type="similarity">
    <text evidence="1">Belongs to the major facilitator superfamily. LplT (TC 2.A.1.42) family.</text>
</comment>
<proteinExistence type="inferred from homology"/>